<name>GATC_ALCBS</name>
<accession>Q0VS71</accession>
<comment type="function">
    <text evidence="1">Allows the formation of correctly charged Asn-tRNA(Asn) or Gln-tRNA(Gln) through the transamidation of misacylated Asp-tRNA(Asn) or Glu-tRNA(Gln) in organisms which lack either or both of asparaginyl-tRNA or glutaminyl-tRNA synthetases. The reaction takes place in the presence of glutamine and ATP through an activated phospho-Asp-tRNA(Asn) or phospho-Glu-tRNA(Gln).</text>
</comment>
<comment type="catalytic activity">
    <reaction evidence="1">
        <text>L-glutamyl-tRNA(Gln) + L-glutamine + ATP + H2O = L-glutaminyl-tRNA(Gln) + L-glutamate + ADP + phosphate + H(+)</text>
        <dbReference type="Rhea" id="RHEA:17521"/>
        <dbReference type="Rhea" id="RHEA-COMP:9681"/>
        <dbReference type="Rhea" id="RHEA-COMP:9684"/>
        <dbReference type="ChEBI" id="CHEBI:15377"/>
        <dbReference type="ChEBI" id="CHEBI:15378"/>
        <dbReference type="ChEBI" id="CHEBI:29985"/>
        <dbReference type="ChEBI" id="CHEBI:30616"/>
        <dbReference type="ChEBI" id="CHEBI:43474"/>
        <dbReference type="ChEBI" id="CHEBI:58359"/>
        <dbReference type="ChEBI" id="CHEBI:78520"/>
        <dbReference type="ChEBI" id="CHEBI:78521"/>
        <dbReference type="ChEBI" id="CHEBI:456216"/>
    </reaction>
</comment>
<comment type="catalytic activity">
    <reaction evidence="1">
        <text>L-aspartyl-tRNA(Asn) + L-glutamine + ATP + H2O = L-asparaginyl-tRNA(Asn) + L-glutamate + ADP + phosphate + 2 H(+)</text>
        <dbReference type="Rhea" id="RHEA:14513"/>
        <dbReference type="Rhea" id="RHEA-COMP:9674"/>
        <dbReference type="Rhea" id="RHEA-COMP:9677"/>
        <dbReference type="ChEBI" id="CHEBI:15377"/>
        <dbReference type="ChEBI" id="CHEBI:15378"/>
        <dbReference type="ChEBI" id="CHEBI:29985"/>
        <dbReference type="ChEBI" id="CHEBI:30616"/>
        <dbReference type="ChEBI" id="CHEBI:43474"/>
        <dbReference type="ChEBI" id="CHEBI:58359"/>
        <dbReference type="ChEBI" id="CHEBI:78515"/>
        <dbReference type="ChEBI" id="CHEBI:78516"/>
        <dbReference type="ChEBI" id="CHEBI:456216"/>
    </reaction>
</comment>
<comment type="subunit">
    <text evidence="1">Heterotrimer of A, B and C subunits.</text>
</comment>
<comment type="similarity">
    <text evidence="1">Belongs to the GatC family.</text>
</comment>
<reference key="1">
    <citation type="journal article" date="2006" name="Nat. Biotechnol.">
        <title>Genome sequence of the ubiquitous hydrocarbon-degrading marine bacterium Alcanivorax borkumensis.</title>
        <authorList>
            <person name="Schneiker S."/>
            <person name="Martins dos Santos V.A.P."/>
            <person name="Bartels D."/>
            <person name="Bekel T."/>
            <person name="Brecht M."/>
            <person name="Buhrmester J."/>
            <person name="Chernikova T.N."/>
            <person name="Denaro R."/>
            <person name="Ferrer M."/>
            <person name="Gertler C."/>
            <person name="Goesmann A."/>
            <person name="Golyshina O.V."/>
            <person name="Kaminski F."/>
            <person name="Khachane A.N."/>
            <person name="Lang S."/>
            <person name="Linke B."/>
            <person name="McHardy A.C."/>
            <person name="Meyer F."/>
            <person name="Nechitaylo T."/>
            <person name="Puehler A."/>
            <person name="Regenhardt D."/>
            <person name="Rupp O."/>
            <person name="Sabirova J.S."/>
            <person name="Selbitschka W."/>
            <person name="Yakimov M.M."/>
            <person name="Timmis K.N."/>
            <person name="Vorhoelter F.-J."/>
            <person name="Weidner S."/>
            <person name="Kaiser O."/>
            <person name="Golyshin P.N."/>
        </authorList>
    </citation>
    <scope>NUCLEOTIDE SEQUENCE [LARGE SCALE GENOMIC DNA]</scope>
    <source>
        <strain>ATCC 700651 / DSM 11573 / NCIMB 13689 / SK2</strain>
    </source>
</reference>
<organism>
    <name type="scientific">Alcanivorax borkumensis (strain ATCC 700651 / DSM 11573 / NCIMB 13689 / SK2)</name>
    <dbReference type="NCBI Taxonomy" id="393595"/>
    <lineage>
        <taxon>Bacteria</taxon>
        <taxon>Pseudomonadati</taxon>
        <taxon>Pseudomonadota</taxon>
        <taxon>Gammaproteobacteria</taxon>
        <taxon>Oceanospirillales</taxon>
        <taxon>Alcanivoracaceae</taxon>
        <taxon>Alcanivorax</taxon>
    </lineage>
</organism>
<gene>
    <name evidence="1" type="primary">gatC</name>
    <name type="ordered locus">ABO_0529</name>
</gene>
<protein>
    <recommendedName>
        <fullName evidence="1">Aspartyl/glutamyl-tRNA(Asn/Gln) amidotransferase subunit C</fullName>
        <shortName evidence="1">Asp/Glu-ADT subunit C</shortName>
        <ecNumber evidence="1">6.3.5.-</ecNumber>
    </recommendedName>
</protein>
<proteinExistence type="inferred from homology"/>
<feature type="chain" id="PRO_1000016060" description="Aspartyl/glutamyl-tRNA(Asn/Gln) amidotransferase subunit C">
    <location>
        <begin position="1"/>
        <end position="95"/>
    </location>
</feature>
<sequence length="95" mass="10262">MAINSKVVAQVAHLARLKVDPQDSNALSDRLNDILAMVDQLQQADVDGVAPMAHPLDVTQPLRDDVVTEPNIRDKALAIAPAVENGCFLVPRVIE</sequence>
<evidence type="ECO:0000255" key="1">
    <source>
        <dbReference type="HAMAP-Rule" id="MF_00122"/>
    </source>
</evidence>
<dbReference type="EC" id="6.3.5.-" evidence="1"/>
<dbReference type="EMBL" id="AM286690">
    <property type="protein sequence ID" value="CAL15977.1"/>
    <property type="molecule type" value="Genomic_DNA"/>
</dbReference>
<dbReference type="RefSeq" id="WP_011587815.1">
    <property type="nucleotide sequence ID" value="NC_008260.1"/>
</dbReference>
<dbReference type="SMR" id="Q0VS71"/>
<dbReference type="STRING" id="393595.ABO_0529"/>
<dbReference type="KEGG" id="abo:ABO_0529"/>
<dbReference type="eggNOG" id="COG0721">
    <property type="taxonomic scope" value="Bacteria"/>
</dbReference>
<dbReference type="HOGENOM" id="CLU_105899_2_2_6"/>
<dbReference type="OrthoDB" id="9794326at2"/>
<dbReference type="Proteomes" id="UP000008871">
    <property type="component" value="Chromosome"/>
</dbReference>
<dbReference type="GO" id="GO:0050566">
    <property type="term" value="F:asparaginyl-tRNA synthase (glutamine-hydrolyzing) activity"/>
    <property type="evidence" value="ECO:0007669"/>
    <property type="project" value="RHEA"/>
</dbReference>
<dbReference type="GO" id="GO:0005524">
    <property type="term" value="F:ATP binding"/>
    <property type="evidence" value="ECO:0007669"/>
    <property type="project" value="UniProtKB-KW"/>
</dbReference>
<dbReference type="GO" id="GO:0050567">
    <property type="term" value="F:glutaminyl-tRNA synthase (glutamine-hydrolyzing) activity"/>
    <property type="evidence" value="ECO:0007669"/>
    <property type="project" value="UniProtKB-UniRule"/>
</dbReference>
<dbReference type="GO" id="GO:0070681">
    <property type="term" value="P:glutaminyl-tRNAGln biosynthesis via transamidation"/>
    <property type="evidence" value="ECO:0007669"/>
    <property type="project" value="TreeGrafter"/>
</dbReference>
<dbReference type="GO" id="GO:0006450">
    <property type="term" value="P:regulation of translational fidelity"/>
    <property type="evidence" value="ECO:0007669"/>
    <property type="project" value="InterPro"/>
</dbReference>
<dbReference type="GO" id="GO:0006412">
    <property type="term" value="P:translation"/>
    <property type="evidence" value="ECO:0007669"/>
    <property type="project" value="UniProtKB-UniRule"/>
</dbReference>
<dbReference type="Gene3D" id="1.10.20.60">
    <property type="entry name" value="Glu-tRNAGln amidotransferase C subunit, N-terminal domain"/>
    <property type="match status" value="1"/>
</dbReference>
<dbReference type="HAMAP" id="MF_00122">
    <property type="entry name" value="GatC"/>
    <property type="match status" value="1"/>
</dbReference>
<dbReference type="InterPro" id="IPR036113">
    <property type="entry name" value="Asp/Glu-ADT_sf_sub_c"/>
</dbReference>
<dbReference type="InterPro" id="IPR003837">
    <property type="entry name" value="GatC"/>
</dbReference>
<dbReference type="NCBIfam" id="TIGR00135">
    <property type="entry name" value="gatC"/>
    <property type="match status" value="1"/>
</dbReference>
<dbReference type="PANTHER" id="PTHR15004">
    <property type="entry name" value="GLUTAMYL-TRNA(GLN) AMIDOTRANSFERASE SUBUNIT C, MITOCHONDRIAL"/>
    <property type="match status" value="1"/>
</dbReference>
<dbReference type="PANTHER" id="PTHR15004:SF0">
    <property type="entry name" value="GLUTAMYL-TRNA(GLN) AMIDOTRANSFERASE SUBUNIT C, MITOCHONDRIAL"/>
    <property type="match status" value="1"/>
</dbReference>
<dbReference type="Pfam" id="PF02686">
    <property type="entry name" value="GatC"/>
    <property type="match status" value="1"/>
</dbReference>
<dbReference type="SUPFAM" id="SSF141000">
    <property type="entry name" value="Glu-tRNAGln amidotransferase C subunit"/>
    <property type="match status" value="1"/>
</dbReference>
<keyword id="KW-0067">ATP-binding</keyword>
<keyword id="KW-0436">Ligase</keyword>
<keyword id="KW-0547">Nucleotide-binding</keyword>
<keyword id="KW-0648">Protein biosynthesis</keyword>
<keyword id="KW-1185">Reference proteome</keyword>